<feature type="chain" id="PRO_0000067843" description="DNA-directed RNA polymerase subunit gamma">
    <location>
        <begin position="1"/>
        <end position="621"/>
    </location>
</feature>
<feature type="binding site" evidence="1">
    <location>
        <position position="463"/>
    </location>
    <ligand>
        <name>Mg(2+)</name>
        <dbReference type="ChEBI" id="CHEBI:18420"/>
    </ligand>
</feature>
<feature type="binding site" evidence="1">
    <location>
        <position position="465"/>
    </location>
    <ligand>
        <name>Mg(2+)</name>
        <dbReference type="ChEBI" id="CHEBI:18420"/>
    </ligand>
</feature>
<feature type="binding site" evidence="1">
    <location>
        <position position="467"/>
    </location>
    <ligand>
        <name>Mg(2+)</name>
        <dbReference type="ChEBI" id="CHEBI:18420"/>
    </ligand>
</feature>
<keyword id="KW-0240">DNA-directed RNA polymerase</keyword>
<keyword id="KW-0460">Magnesium</keyword>
<keyword id="KW-0479">Metal-binding</keyword>
<keyword id="KW-0548">Nucleotidyltransferase</keyword>
<keyword id="KW-0804">Transcription</keyword>
<keyword id="KW-0808">Transferase</keyword>
<dbReference type="EC" id="2.7.7.6" evidence="1"/>
<dbReference type="EMBL" id="M29747">
    <property type="protein sequence ID" value="AAA25517.1"/>
    <property type="molecule type" value="Genomic_DNA"/>
</dbReference>
<dbReference type="PIR" id="A32838">
    <property type="entry name" value="A32838"/>
</dbReference>
<dbReference type="SMR" id="P14563"/>
<dbReference type="GO" id="GO:0000428">
    <property type="term" value="C:DNA-directed RNA polymerase complex"/>
    <property type="evidence" value="ECO:0007669"/>
    <property type="project" value="UniProtKB-KW"/>
</dbReference>
<dbReference type="GO" id="GO:0003677">
    <property type="term" value="F:DNA binding"/>
    <property type="evidence" value="ECO:0007669"/>
    <property type="project" value="UniProtKB-UniRule"/>
</dbReference>
<dbReference type="GO" id="GO:0003899">
    <property type="term" value="F:DNA-directed RNA polymerase activity"/>
    <property type="evidence" value="ECO:0007669"/>
    <property type="project" value="UniProtKB-UniRule"/>
</dbReference>
<dbReference type="GO" id="GO:0000287">
    <property type="term" value="F:magnesium ion binding"/>
    <property type="evidence" value="ECO:0007669"/>
    <property type="project" value="UniProtKB-UniRule"/>
</dbReference>
<dbReference type="GO" id="GO:0006351">
    <property type="term" value="P:DNA-templated transcription"/>
    <property type="evidence" value="ECO:0007669"/>
    <property type="project" value="UniProtKB-UniRule"/>
</dbReference>
<dbReference type="Gene3D" id="1.10.40.90">
    <property type="match status" value="1"/>
</dbReference>
<dbReference type="Gene3D" id="2.40.40.20">
    <property type="match status" value="1"/>
</dbReference>
<dbReference type="Gene3D" id="4.10.860.120">
    <property type="entry name" value="RNA polymerase II, clamp domain"/>
    <property type="match status" value="1"/>
</dbReference>
<dbReference type="Gene3D" id="1.10.274.100">
    <property type="entry name" value="RNA polymerase Rpb1, domain 3"/>
    <property type="match status" value="1"/>
</dbReference>
<dbReference type="HAMAP" id="MF_01323">
    <property type="entry name" value="RNApol_bact_RpoC1"/>
    <property type="match status" value="1"/>
</dbReference>
<dbReference type="InterPro" id="IPR012755">
    <property type="entry name" value="DNA-dir_RpoC1_gamma"/>
</dbReference>
<dbReference type="InterPro" id="IPR045867">
    <property type="entry name" value="DNA-dir_RpoC_beta_prime"/>
</dbReference>
<dbReference type="InterPro" id="IPR000722">
    <property type="entry name" value="RNA_pol_asu"/>
</dbReference>
<dbReference type="InterPro" id="IPR006592">
    <property type="entry name" value="RNA_pol_N"/>
</dbReference>
<dbReference type="InterPro" id="IPR007080">
    <property type="entry name" value="RNA_pol_Rpb1_1"/>
</dbReference>
<dbReference type="InterPro" id="IPR007066">
    <property type="entry name" value="RNA_pol_Rpb1_3"/>
</dbReference>
<dbReference type="InterPro" id="IPR042102">
    <property type="entry name" value="RNA_pol_Rpb1_3_sf"/>
</dbReference>
<dbReference type="InterPro" id="IPR044893">
    <property type="entry name" value="RNA_pol_Rpb1_clamp_domain"/>
</dbReference>
<dbReference type="InterPro" id="IPR034678">
    <property type="entry name" value="RNApol_RpoC1"/>
</dbReference>
<dbReference type="NCBIfam" id="NF002729">
    <property type="entry name" value="PRK02625.1"/>
    <property type="match status" value="1"/>
</dbReference>
<dbReference type="NCBIfam" id="TIGR02387">
    <property type="entry name" value="rpoC1_cyan"/>
    <property type="match status" value="1"/>
</dbReference>
<dbReference type="PANTHER" id="PTHR19376">
    <property type="entry name" value="DNA-DIRECTED RNA POLYMERASE"/>
    <property type="match status" value="1"/>
</dbReference>
<dbReference type="PANTHER" id="PTHR19376:SF54">
    <property type="entry name" value="DNA-DIRECTED RNA POLYMERASE SUBUNIT BETA"/>
    <property type="match status" value="1"/>
</dbReference>
<dbReference type="Pfam" id="PF04997">
    <property type="entry name" value="RNA_pol_Rpb1_1"/>
    <property type="match status" value="1"/>
</dbReference>
<dbReference type="Pfam" id="PF00623">
    <property type="entry name" value="RNA_pol_Rpb1_2"/>
    <property type="match status" value="2"/>
</dbReference>
<dbReference type="Pfam" id="PF04983">
    <property type="entry name" value="RNA_pol_Rpb1_3"/>
    <property type="match status" value="1"/>
</dbReference>
<dbReference type="SMART" id="SM00663">
    <property type="entry name" value="RPOLA_N"/>
    <property type="match status" value="1"/>
</dbReference>
<dbReference type="SUPFAM" id="SSF64484">
    <property type="entry name" value="beta and beta-prime subunits of DNA dependent RNA-polymerase"/>
    <property type="match status" value="1"/>
</dbReference>
<evidence type="ECO:0000255" key="1">
    <source>
        <dbReference type="HAMAP-Rule" id="MF_01323"/>
    </source>
</evidence>
<accession>P14563</accession>
<protein>
    <recommendedName>
        <fullName evidence="1">DNA-directed RNA polymerase subunit gamma</fullName>
        <shortName evidence="1">RNAP subunit gamma</shortName>
        <ecNumber evidence="1">2.7.7.6</ecNumber>
    </recommendedName>
    <alternativeName>
        <fullName evidence="1">RNA polymerase subunit gamma</fullName>
    </alternativeName>
    <alternativeName>
        <fullName evidence="1">Transcriptase subunit gamma</fullName>
    </alternativeName>
</protein>
<organism>
    <name type="scientific">Nostoc commune</name>
    <dbReference type="NCBI Taxonomy" id="1178"/>
    <lineage>
        <taxon>Bacteria</taxon>
        <taxon>Bacillati</taxon>
        <taxon>Cyanobacteriota</taxon>
        <taxon>Cyanophyceae</taxon>
        <taxon>Nostocales</taxon>
        <taxon>Nostocaceae</taxon>
        <taxon>Nostoc</taxon>
    </lineage>
</organism>
<sequence>MRPAQTNQFDYVKIGLASPERIRQWGERTLPNGQVVGEVTKPETINYRTLKPEMDGLFCERIFGPKDWECHCGKYKESVIEVLSVSAVVLEVTESRVRRHRMGYIKLAAPVAHVGYSKAFLAIFHSVGYALRDVEQIVYFNSYVVLSPGNAETLTYKQLLSEDQWLEIEDQIYSEDSLLQGVEVGIGAEALLRLLADINLEQEAESLREEIGNAKGQKRAKLIKRLRVIDNFIATGSKPEWMVMAVIPVIPPDLRPMVQLDGGRFATSDLNDLYRRVINRNNRLARLQEILAPEIIVRNEKRMLQEAVDALIDNGRRGRTVVGANNRPLKSLSDIIEGKQGRFRQNLLGKRVDYSGRSVIVVGPKLKIHQCGLPREMAIELFQPFVINRLIRSGMVIHQAAPMISRNDPSVWDVLEEVIEGHPVMLNRAPTLHRLGIQSFEPILVEGRAIQLHPLVCPAFNADFDGDQMAVHVPLSLESQAEARLLMLASNNILSPATGKPIITPSQDMVLGAYYLTAENPGATKGAGKYFSSLEDVIMAFQQEQIDLHAYIYVRFDGEIESDQPDTEPVKVTENEDGTRTLLYKFRRVRQDAKGNVLSQYIYTTPGRVIYNNAIQEALAS</sequence>
<reference key="1">
    <citation type="journal article" date="1989" name="J. Bacteriol.">
        <title>Cyanobacterial RNA polymerase genes rpoC1 and rpoC2 correspond to rpoC of Escherichia coli.</title>
        <authorList>
            <person name="Xie W.-Q."/>
            <person name="Jaeger K."/>
            <person name="Potts M."/>
        </authorList>
    </citation>
    <scope>NUCLEOTIDE SEQUENCE [GENOMIC DNA]</scope>
    <source>
        <strain>UTEX 584 / SAG 1453-5</strain>
    </source>
</reference>
<proteinExistence type="inferred from homology"/>
<comment type="function">
    <text evidence="1">DNA-dependent RNA polymerase catalyzes the transcription of DNA into RNA using the four ribonucleoside triphosphates as substrates.</text>
</comment>
<comment type="catalytic activity">
    <reaction evidence="1">
        <text>RNA(n) + a ribonucleoside 5'-triphosphate = RNA(n+1) + diphosphate</text>
        <dbReference type="Rhea" id="RHEA:21248"/>
        <dbReference type="Rhea" id="RHEA-COMP:14527"/>
        <dbReference type="Rhea" id="RHEA-COMP:17342"/>
        <dbReference type="ChEBI" id="CHEBI:33019"/>
        <dbReference type="ChEBI" id="CHEBI:61557"/>
        <dbReference type="ChEBI" id="CHEBI:140395"/>
        <dbReference type="EC" id="2.7.7.6"/>
    </reaction>
</comment>
<comment type="cofactor">
    <cofactor evidence="1">
        <name>Mg(2+)</name>
        <dbReference type="ChEBI" id="CHEBI:18420"/>
    </cofactor>
    <text evidence="1">Binds 1 Mg(2+) ion per subunit.</text>
</comment>
<comment type="subunit">
    <text evidence="1">In cyanobacteria the RNAP catalytic core is composed of 2 alpha, 1 beta, 1 beta', 1 gamma and 1 omega subunit. When a sigma factor is associated with the core the holoenzyme is formed, which can initiate transcription.</text>
</comment>
<comment type="similarity">
    <text evidence="1">Belongs to the RNA polymerase beta' chain family. RpoC1 subfamily.</text>
</comment>
<name>RPOC1_NOSCO</name>
<gene>
    <name evidence="1" type="primary">rpoC1</name>
</gene>